<accession>B9IY79</accession>
<protein>
    <recommendedName>
        <fullName evidence="1">Ribosomal protein L11 methyltransferase</fullName>
        <shortName evidence="1">L11 Mtase</shortName>
        <ecNumber evidence="1">2.1.1.-</ecNumber>
    </recommendedName>
</protein>
<organism>
    <name type="scientific">Bacillus cereus (strain Q1)</name>
    <dbReference type="NCBI Taxonomy" id="361100"/>
    <lineage>
        <taxon>Bacteria</taxon>
        <taxon>Bacillati</taxon>
        <taxon>Bacillota</taxon>
        <taxon>Bacilli</taxon>
        <taxon>Bacillales</taxon>
        <taxon>Bacillaceae</taxon>
        <taxon>Bacillus</taxon>
        <taxon>Bacillus cereus group</taxon>
    </lineage>
</organism>
<gene>
    <name evidence="1" type="primary">prmA</name>
    <name type="ordered locus">BCQ_4098</name>
</gene>
<reference key="1">
    <citation type="journal article" date="2009" name="J. Bacteriol.">
        <title>Complete genome sequence of the extremophilic Bacillus cereus strain Q1 with industrial applications.</title>
        <authorList>
            <person name="Xiong Z."/>
            <person name="Jiang Y."/>
            <person name="Qi D."/>
            <person name="Lu H."/>
            <person name="Yang F."/>
            <person name="Yang J."/>
            <person name="Chen L."/>
            <person name="Sun L."/>
            <person name="Xu X."/>
            <person name="Xue Y."/>
            <person name="Zhu Y."/>
            <person name="Jin Q."/>
        </authorList>
    </citation>
    <scope>NUCLEOTIDE SEQUENCE [LARGE SCALE GENOMIC DNA]</scope>
    <source>
        <strain>Q1</strain>
    </source>
</reference>
<name>PRMA_BACCQ</name>
<evidence type="ECO:0000255" key="1">
    <source>
        <dbReference type="HAMAP-Rule" id="MF_00735"/>
    </source>
</evidence>
<feature type="chain" id="PRO_1000192584" description="Ribosomal protein L11 methyltransferase">
    <location>
        <begin position="1"/>
        <end position="312"/>
    </location>
</feature>
<feature type="binding site" evidence="1">
    <location>
        <position position="162"/>
    </location>
    <ligand>
        <name>S-adenosyl-L-methionine</name>
        <dbReference type="ChEBI" id="CHEBI:59789"/>
    </ligand>
</feature>
<feature type="binding site" evidence="1">
    <location>
        <position position="183"/>
    </location>
    <ligand>
        <name>S-adenosyl-L-methionine</name>
        <dbReference type="ChEBI" id="CHEBI:59789"/>
    </ligand>
</feature>
<feature type="binding site" evidence="1">
    <location>
        <position position="205"/>
    </location>
    <ligand>
        <name>S-adenosyl-L-methionine</name>
        <dbReference type="ChEBI" id="CHEBI:59789"/>
    </ligand>
</feature>
<feature type="binding site" evidence="1">
    <location>
        <position position="248"/>
    </location>
    <ligand>
        <name>S-adenosyl-L-methionine</name>
        <dbReference type="ChEBI" id="CHEBI:59789"/>
    </ligand>
</feature>
<sequence length="312" mass="33756">MKWSEISIHTTEEAVEAVSHILHEAGASGVAIEDPAELTKEREQQYGEIYALNPDEYPAEGVLIKAYFPQTDSLHETIAGVKSSIDVLPSYDIEIGTGNITVNEVNEEDWATAWKKYYHPVQISDTFTIVPTWEEYTPSSPEEKIIELDPGMAFGTGTHPTTTMCIRALERTVQPGNTIIDVGTGSGVLSIAAAKLGASSVQAYDLDPVAVESAEMNVRLNKTDDIVSVGQNSLLEGIEGPVDLIVANLLAEIILLFPEDAARVVKSGGLFITSGIIAAKEKVISEALEKAGFTIEEVLRMEDWVAIIARNA</sequence>
<comment type="function">
    <text evidence="1">Methylates ribosomal protein L11.</text>
</comment>
<comment type="catalytic activity">
    <reaction evidence="1">
        <text>L-lysyl-[protein] + 3 S-adenosyl-L-methionine = N(6),N(6),N(6)-trimethyl-L-lysyl-[protein] + 3 S-adenosyl-L-homocysteine + 3 H(+)</text>
        <dbReference type="Rhea" id="RHEA:54192"/>
        <dbReference type="Rhea" id="RHEA-COMP:9752"/>
        <dbReference type="Rhea" id="RHEA-COMP:13826"/>
        <dbReference type="ChEBI" id="CHEBI:15378"/>
        <dbReference type="ChEBI" id="CHEBI:29969"/>
        <dbReference type="ChEBI" id="CHEBI:57856"/>
        <dbReference type="ChEBI" id="CHEBI:59789"/>
        <dbReference type="ChEBI" id="CHEBI:61961"/>
    </reaction>
</comment>
<comment type="subcellular location">
    <subcellularLocation>
        <location evidence="1">Cytoplasm</location>
    </subcellularLocation>
</comment>
<comment type="similarity">
    <text evidence="1">Belongs to the methyltransferase superfamily. PrmA family.</text>
</comment>
<keyword id="KW-0963">Cytoplasm</keyword>
<keyword id="KW-0489">Methyltransferase</keyword>
<keyword id="KW-0949">S-adenosyl-L-methionine</keyword>
<keyword id="KW-0808">Transferase</keyword>
<proteinExistence type="inferred from homology"/>
<dbReference type="EC" id="2.1.1.-" evidence="1"/>
<dbReference type="EMBL" id="CP000227">
    <property type="protein sequence ID" value="ACM14525.1"/>
    <property type="molecule type" value="Genomic_DNA"/>
</dbReference>
<dbReference type="SMR" id="B9IY79"/>
<dbReference type="KEGG" id="bcq:BCQ_4098"/>
<dbReference type="HOGENOM" id="CLU_049382_0_1_9"/>
<dbReference type="Proteomes" id="UP000000441">
    <property type="component" value="Chromosome"/>
</dbReference>
<dbReference type="GO" id="GO:0005737">
    <property type="term" value="C:cytoplasm"/>
    <property type="evidence" value="ECO:0007669"/>
    <property type="project" value="UniProtKB-SubCell"/>
</dbReference>
<dbReference type="GO" id="GO:0016279">
    <property type="term" value="F:protein-lysine N-methyltransferase activity"/>
    <property type="evidence" value="ECO:0007669"/>
    <property type="project" value="RHEA"/>
</dbReference>
<dbReference type="GO" id="GO:0032259">
    <property type="term" value="P:methylation"/>
    <property type="evidence" value="ECO:0007669"/>
    <property type="project" value="UniProtKB-KW"/>
</dbReference>
<dbReference type="CDD" id="cd02440">
    <property type="entry name" value="AdoMet_MTases"/>
    <property type="match status" value="1"/>
</dbReference>
<dbReference type="Gene3D" id="3.40.50.150">
    <property type="entry name" value="Vaccinia Virus protein VP39"/>
    <property type="match status" value="1"/>
</dbReference>
<dbReference type="HAMAP" id="MF_00735">
    <property type="entry name" value="Methyltr_PrmA"/>
    <property type="match status" value="1"/>
</dbReference>
<dbReference type="InterPro" id="IPR050078">
    <property type="entry name" value="Ribosomal_L11_MeTrfase_PrmA"/>
</dbReference>
<dbReference type="InterPro" id="IPR004498">
    <property type="entry name" value="Ribosomal_PrmA_MeTrfase"/>
</dbReference>
<dbReference type="InterPro" id="IPR029063">
    <property type="entry name" value="SAM-dependent_MTases_sf"/>
</dbReference>
<dbReference type="NCBIfam" id="TIGR00406">
    <property type="entry name" value="prmA"/>
    <property type="match status" value="1"/>
</dbReference>
<dbReference type="PANTHER" id="PTHR43648">
    <property type="entry name" value="ELECTRON TRANSFER FLAVOPROTEIN BETA SUBUNIT LYSINE METHYLTRANSFERASE"/>
    <property type="match status" value="1"/>
</dbReference>
<dbReference type="PANTHER" id="PTHR43648:SF1">
    <property type="entry name" value="ELECTRON TRANSFER FLAVOPROTEIN BETA SUBUNIT LYSINE METHYLTRANSFERASE"/>
    <property type="match status" value="1"/>
</dbReference>
<dbReference type="Pfam" id="PF06325">
    <property type="entry name" value="PrmA"/>
    <property type="match status" value="1"/>
</dbReference>
<dbReference type="PIRSF" id="PIRSF000401">
    <property type="entry name" value="RPL11_MTase"/>
    <property type="match status" value="1"/>
</dbReference>
<dbReference type="SUPFAM" id="SSF53335">
    <property type="entry name" value="S-adenosyl-L-methionine-dependent methyltransferases"/>
    <property type="match status" value="1"/>
</dbReference>